<sequence>MEAKAEGFCSFLVGLSGAPVNSKELKSALEKGDMKARASALEALIRMHLNGEPQNHMIMTVIKFITPLDDHYIKKLVLYFWEVVDKTDASGKLLSEMILICSFLREDLLHPNEYIRGLALRFMCKVKERELVEPLVSSVVQNLTHRVTYVRRNAVLAVHRIFKRFPELLPDAAELVEKFISEENDVSASRNAFEMLVECSPDRVVKFLAELRESKNLESLGATLQMSIVDFAGHMIRANPYDKGRYVTVLFSILQSNNPAVRYQCASTLLSISTSPTAIRQAALTFIDLLKTHTDISVRLIVVDQLDAMRERFSKILQDSLLDILSVLANGTMEIRKRIVTLGVELVSNQNSEVFVQAIKKELYWVKNECDVDDKESLLEYKKLLIRATRTAVARRPHMASAVIPLVLEYLYEEDDSGFEVVSLIREVLQLQPSLRSETLRQLRQTLRMIRCPSVIRTVLWLLGTHVTSADDALEVIRLLINTLEPLPLEPTVKEQMKQQEDFDGHKGGQQKPRMQMTTIVQEDGTYVMSSVPSNKTQEDAEGNDSNCGLRGVLTGGKFFIAAPLASTLSKLIIRLFNHHSSGVDESTMKEAQNSAIMLLNEVLRFCTMDGAAGMIDDATHEQIRLALLNITNPRSPLLATFVEDSSKALDSLTNKVGSIAGGDGFDFNKRNNDNVVGRTSFDEQQVALCSVDTPVMFTQIMEGKGSLLELEAVDDLGSVVANASIEKTEEFLIKLEKTVPLSGFCDPLYCEASVTVHQFDITVDWYIANCTANVLRDVSIELTPLGSMKLCERPQVHTIQPHGSVRIRTALKVGSPETGVICASVLYEGPQNERGCVVLNNVRVDIMNYVRPAKCSASEFRDKWCKYDWENAVAIRTEKTDMREYVEYVMQGTNTRLLEPYPEEDDEVVSAFDGKGDNGHRYVSCNMYARTLFGDDALLNVSIERDAEGKLSGMVRVRANKRPVAYGFGEKLNILNRRIVS</sequence>
<accession>Q9NFU6</accession>
<evidence type="ECO:0000250" key="1">
    <source>
        <dbReference type="UniProtKB" id="A0JN39"/>
    </source>
</evidence>
<evidence type="ECO:0000250" key="2">
    <source>
        <dbReference type="UniProtKB" id="P23514"/>
    </source>
</evidence>
<evidence type="ECO:0000255" key="3"/>
<evidence type="ECO:0000269" key="4">
    <source>
    </source>
</evidence>
<evidence type="ECO:0000312" key="5">
    <source>
        <dbReference type="EMBL" id="CAB87383.1"/>
    </source>
</evidence>
<protein>
    <recommendedName>
        <fullName evidence="2">Coatomer subunit beta</fullName>
    </recommendedName>
    <alternativeName>
        <fullName evidence="2">Beta-coat protein</fullName>
        <shortName evidence="2">Beta-COP</shortName>
    </alternativeName>
</protein>
<dbReference type="EMBL" id="AJ271083">
    <property type="protein sequence ID" value="CAB87383.1"/>
    <property type="molecule type" value="Genomic_DNA"/>
</dbReference>
<dbReference type="SMR" id="Q9NFU6"/>
<dbReference type="GO" id="GO:0030126">
    <property type="term" value="C:COPI vesicle coat"/>
    <property type="evidence" value="ECO:0007669"/>
    <property type="project" value="InterPro"/>
</dbReference>
<dbReference type="GO" id="GO:0000139">
    <property type="term" value="C:Golgi membrane"/>
    <property type="evidence" value="ECO:0007669"/>
    <property type="project" value="UniProtKB-SubCell"/>
</dbReference>
<dbReference type="GO" id="GO:0005198">
    <property type="term" value="F:structural molecule activity"/>
    <property type="evidence" value="ECO:0007669"/>
    <property type="project" value="InterPro"/>
</dbReference>
<dbReference type="GO" id="GO:0006888">
    <property type="term" value="P:endoplasmic reticulum to Golgi vesicle-mediated transport"/>
    <property type="evidence" value="ECO:0007669"/>
    <property type="project" value="TreeGrafter"/>
</dbReference>
<dbReference type="GO" id="GO:0006891">
    <property type="term" value="P:intra-Golgi vesicle-mediated transport"/>
    <property type="evidence" value="ECO:0007669"/>
    <property type="project" value="TreeGrafter"/>
</dbReference>
<dbReference type="GO" id="GO:0006886">
    <property type="term" value="P:intracellular protein transport"/>
    <property type="evidence" value="ECO:0007669"/>
    <property type="project" value="InterPro"/>
</dbReference>
<dbReference type="FunFam" id="1.25.10.10:FF:000444">
    <property type="entry name" value="Coatomer subunit beta"/>
    <property type="match status" value="1"/>
</dbReference>
<dbReference type="Gene3D" id="1.25.10.10">
    <property type="entry name" value="Leucine-rich Repeat Variant"/>
    <property type="match status" value="1"/>
</dbReference>
<dbReference type="InterPro" id="IPR011989">
    <property type="entry name" value="ARM-like"/>
</dbReference>
<dbReference type="InterPro" id="IPR016024">
    <property type="entry name" value="ARM-type_fold"/>
</dbReference>
<dbReference type="InterPro" id="IPR002553">
    <property type="entry name" value="Clathrin/coatomer_adapt-like_N"/>
</dbReference>
<dbReference type="InterPro" id="IPR011710">
    <property type="entry name" value="Coatomer_bsu_C"/>
</dbReference>
<dbReference type="InterPro" id="IPR016460">
    <property type="entry name" value="COPB1"/>
</dbReference>
<dbReference type="InterPro" id="IPR029446">
    <property type="entry name" value="COPB1_appendage_platform_dom"/>
</dbReference>
<dbReference type="PANTHER" id="PTHR10635">
    <property type="entry name" value="COATOMER SUBUNIT BETA"/>
    <property type="match status" value="1"/>
</dbReference>
<dbReference type="PANTHER" id="PTHR10635:SF0">
    <property type="entry name" value="COATOMER SUBUNIT BETA"/>
    <property type="match status" value="1"/>
</dbReference>
<dbReference type="Pfam" id="PF01602">
    <property type="entry name" value="Adaptin_N"/>
    <property type="match status" value="1"/>
</dbReference>
<dbReference type="Pfam" id="PF07718">
    <property type="entry name" value="Coatamer_beta_C"/>
    <property type="match status" value="1"/>
</dbReference>
<dbReference type="Pfam" id="PF14806">
    <property type="entry name" value="Coatomer_b_Cpla"/>
    <property type="match status" value="1"/>
</dbReference>
<dbReference type="PIRSF" id="PIRSF005727">
    <property type="entry name" value="Coatomer_beta_subunit"/>
    <property type="match status" value="1"/>
</dbReference>
<dbReference type="SUPFAM" id="SSF48371">
    <property type="entry name" value="ARM repeat"/>
    <property type="match status" value="1"/>
</dbReference>
<organism>
    <name type="scientific">Trypanosoma brucei brucei</name>
    <dbReference type="NCBI Taxonomy" id="5702"/>
    <lineage>
        <taxon>Eukaryota</taxon>
        <taxon>Discoba</taxon>
        <taxon>Euglenozoa</taxon>
        <taxon>Kinetoplastea</taxon>
        <taxon>Metakinetoplastina</taxon>
        <taxon>Trypanosomatida</taxon>
        <taxon>Trypanosomatidae</taxon>
        <taxon>Trypanosoma</taxon>
    </lineage>
</organism>
<keyword id="KW-0963">Cytoplasm</keyword>
<keyword id="KW-0968">Cytoplasmic vesicle</keyword>
<keyword id="KW-0931">ER-Golgi transport</keyword>
<keyword id="KW-0333">Golgi apparatus</keyword>
<keyword id="KW-0472">Membrane</keyword>
<keyword id="KW-0653">Protein transport</keyword>
<keyword id="KW-0677">Repeat</keyword>
<keyword id="KW-0813">Transport</keyword>
<feature type="chain" id="PRO_0000408948" description="Coatomer subunit beta">
    <location>
        <begin position="1"/>
        <end position="982"/>
    </location>
</feature>
<feature type="repeat" description="HEAT 1" evidence="3">
    <location>
        <begin position="16"/>
        <end position="53"/>
    </location>
</feature>
<feature type="repeat" description="HEAT 2" evidence="3">
    <location>
        <begin position="130"/>
        <end position="167"/>
    </location>
</feature>
<feature type="repeat" description="HEAT 3" evidence="3">
    <location>
        <begin position="241"/>
        <end position="278"/>
    </location>
</feature>
<feature type="repeat" description="HEAT 4" evidence="3">
    <location>
        <begin position="317"/>
        <end position="352"/>
    </location>
</feature>
<reference evidence="5" key="1">
    <citation type="journal article" date="2001" name="Mol. Biochem. Parasitol.">
        <title>The coatomer of Trypanosoma brucei.</title>
        <authorList>
            <person name="Maier A.G."/>
            <person name="Webb H."/>
            <person name="Ding M."/>
            <person name="Bremser M."/>
            <person name="Carrington M."/>
            <person name="Clayton C."/>
        </authorList>
    </citation>
    <scope>NUCLEOTIDE SEQUENCE [GENOMIC DNA]</scope>
    <scope>SUBCELLULAR LOCATION</scope>
</reference>
<proteinExistence type="inferred from homology"/>
<name>COPB_TRYBB</name>
<comment type="function">
    <text evidence="2">The coatomer is a cytosolic protein complex that binds to dilysine motifs and reversibly associates with Golgi non-clathrin-coated vesicles, which further mediate biosynthetic protein transport from the ER, via the Golgi up to the trans Golgi network. Coatomer complex is required for budding from Golgi membranes, and is essential for the retrograde Golgi-to-ER transport of dilysine-tagged proteins (By similarity).</text>
</comment>
<comment type="subunit">
    <text evidence="1">Oligomeric complex that consists of at least the alpha, beta, beta', gamma, delta, epsilon and zeta subunits.</text>
</comment>
<comment type="subcellular location">
    <subcellularLocation>
        <location evidence="4">Cytoplasm</location>
    </subcellularLocation>
    <subcellularLocation>
        <location evidence="2">Golgi apparatus membrane</location>
        <topology evidence="2">Peripheral membrane protein</topology>
        <orientation evidence="2">Cytoplasmic side</orientation>
    </subcellularLocation>
    <subcellularLocation>
        <location evidence="2">Cytoplasmic vesicle</location>
        <location evidence="2">COPI-coated vesicle membrane</location>
        <topology evidence="2">Peripheral membrane protein</topology>
        <orientation evidence="2">Cytoplasmic side</orientation>
    </subcellularLocation>
    <text evidence="2">The coatomer is cytoplasmic or polymerized on the cytoplasmic side of the Golgi, as well as on the vesicles/buds originating from it.</text>
</comment>